<protein>
    <recommendedName>
        <fullName>SPbeta prophage-derived uncharacterized protein YorM</fullName>
    </recommendedName>
</protein>
<keyword id="KW-1185">Reference proteome</keyword>
<keyword id="KW-0732">Signal</keyword>
<organism>
    <name type="scientific">Bacillus subtilis (strain 168)</name>
    <dbReference type="NCBI Taxonomy" id="224308"/>
    <lineage>
        <taxon>Bacteria</taxon>
        <taxon>Bacillati</taxon>
        <taxon>Bacillota</taxon>
        <taxon>Bacilli</taxon>
        <taxon>Bacillales</taxon>
        <taxon>Bacillaceae</taxon>
        <taxon>Bacillus</taxon>
    </lineage>
</organism>
<gene>
    <name type="primary">yorM</name>
    <name type="ordered locus">BSU20330</name>
</gene>
<feature type="signal peptide" evidence="1">
    <location>
        <begin position="1"/>
        <end position="37"/>
    </location>
</feature>
<feature type="chain" id="PRO_0000360187" description="SPbeta prophage-derived uncharacterized protein YorM">
    <location>
        <begin position="38"/>
        <end position="238"/>
    </location>
</feature>
<feature type="region of interest" description="Disordered" evidence="2">
    <location>
        <begin position="111"/>
        <end position="132"/>
    </location>
</feature>
<feature type="compositionally biased region" description="Basic residues" evidence="2">
    <location>
        <begin position="111"/>
        <end position="121"/>
    </location>
</feature>
<proteinExistence type="inferred from homology"/>
<name>YORM_BACSU</name>
<accession>O31901</accession>
<reference key="1">
    <citation type="journal article" date="1997" name="Nature">
        <title>The complete genome sequence of the Gram-positive bacterium Bacillus subtilis.</title>
        <authorList>
            <person name="Kunst F."/>
            <person name="Ogasawara N."/>
            <person name="Moszer I."/>
            <person name="Albertini A.M."/>
            <person name="Alloni G."/>
            <person name="Azevedo V."/>
            <person name="Bertero M.G."/>
            <person name="Bessieres P."/>
            <person name="Bolotin A."/>
            <person name="Borchert S."/>
            <person name="Borriss R."/>
            <person name="Boursier L."/>
            <person name="Brans A."/>
            <person name="Braun M."/>
            <person name="Brignell S.C."/>
            <person name="Bron S."/>
            <person name="Brouillet S."/>
            <person name="Bruschi C.V."/>
            <person name="Caldwell B."/>
            <person name="Capuano V."/>
            <person name="Carter N.M."/>
            <person name="Choi S.-K."/>
            <person name="Codani J.-J."/>
            <person name="Connerton I.F."/>
            <person name="Cummings N.J."/>
            <person name="Daniel R.A."/>
            <person name="Denizot F."/>
            <person name="Devine K.M."/>
            <person name="Duesterhoeft A."/>
            <person name="Ehrlich S.D."/>
            <person name="Emmerson P.T."/>
            <person name="Entian K.-D."/>
            <person name="Errington J."/>
            <person name="Fabret C."/>
            <person name="Ferrari E."/>
            <person name="Foulger D."/>
            <person name="Fritz C."/>
            <person name="Fujita M."/>
            <person name="Fujita Y."/>
            <person name="Fuma S."/>
            <person name="Galizzi A."/>
            <person name="Galleron N."/>
            <person name="Ghim S.-Y."/>
            <person name="Glaser P."/>
            <person name="Goffeau A."/>
            <person name="Golightly E.J."/>
            <person name="Grandi G."/>
            <person name="Guiseppi G."/>
            <person name="Guy B.J."/>
            <person name="Haga K."/>
            <person name="Haiech J."/>
            <person name="Harwood C.R."/>
            <person name="Henaut A."/>
            <person name="Hilbert H."/>
            <person name="Holsappel S."/>
            <person name="Hosono S."/>
            <person name="Hullo M.-F."/>
            <person name="Itaya M."/>
            <person name="Jones L.-M."/>
            <person name="Joris B."/>
            <person name="Karamata D."/>
            <person name="Kasahara Y."/>
            <person name="Klaerr-Blanchard M."/>
            <person name="Klein C."/>
            <person name="Kobayashi Y."/>
            <person name="Koetter P."/>
            <person name="Koningstein G."/>
            <person name="Krogh S."/>
            <person name="Kumano M."/>
            <person name="Kurita K."/>
            <person name="Lapidus A."/>
            <person name="Lardinois S."/>
            <person name="Lauber J."/>
            <person name="Lazarevic V."/>
            <person name="Lee S.-M."/>
            <person name="Levine A."/>
            <person name="Liu H."/>
            <person name="Masuda S."/>
            <person name="Mauel C."/>
            <person name="Medigue C."/>
            <person name="Medina N."/>
            <person name="Mellado R.P."/>
            <person name="Mizuno M."/>
            <person name="Moestl D."/>
            <person name="Nakai S."/>
            <person name="Noback M."/>
            <person name="Noone D."/>
            <person name="O'Reilly M."/>
            <person name="Ogawa K."/>
            <person name="Ogiwara A."/>
            <person name="Oudega B."/>
            <person name="Park S.-H."/>
            <person name="Parro V."/>
            <person name="Pohl T.M."/>
            <person name="Portetelle D."/>
            <person name="Porwollik S."/>
            <person name="Prescott A.M."/>
            <person name="Presecan E."/>
            <person name="Pujic P."/>
            <person name="Purnelle B."/>
            <person name="Rapoport G."/>
            <person name="Rey M."/>
            <person name="Reynolds S."/>
            <person name="Rieger M."/>
            <person name="Rivolta C."/>
            <person name="Rocha E."/>
            <person name="Roche B."/>
            <person name="Rose M."/>
            <person name="Sadaie Y."/>
            <person name="Sato T."/>
            <person name="Scanlan E."/>
            <person name="Schleich S."/>
            <person name="Schroeter R."/>
            <person name="Scoffone F."/>
            <person name="Sekiguchi J."/>
            <person name="Sekowska A."/>
            <person name="Seror S.J."/>
            <person name="Serror P."/>
            <person name="Shin B.-S."/>
            <person name="Soldo B."/>
            <person name="Sorokin A."/>
            <person name="Tacconi E."/>
            <person name="Takagi T."/>
            <person name="Takahashi H."/>
            <person name="Takemaru K."/>
            <person name="Takeuchi M."/>
            <person name="Tamakoshi A."/>
            <person name="Tanaka T."/>
            <person name="Terpstra P."/>
            <person name="Tognoni A."/>
            <person name="Tosato V."/>
            <person name="Uchiyama S."/>
            <person name="Vandenbol M."/>
            <person name="Vannier F."/>
            <person name="Vassarotti A."/>
            <person name="Viari A."/>
            <person name="Wambutt R."/>
            <person name="Wedler E."/>
            <person name="Wedler H."/>
            <person name="Weitzenegger T."/>
            <person name="Winters P."/>
            <person name="Wipat A."/>
            <person name="Yamamoto H."/>
            <person name="Yamane K."/>
            <person name="Yasumoto K."/>
            <person name="Yata K."/>
            <person name="Yoshida K."/>
            <person name="Yoshikawa H.-F."/>
            <person name="Zumstein E."/>
            <person name="Yoshikawa H."/>
            <person name="Danchin A."/>
        </authorList>
    </citation>
    <scope>NUCLEOTIDE SEQUENCE [LARGE SCALE GENOMIC DNA]</scope>
    <source>
        <strain>168</strain>
    </source>
</reference>
<sequence>MFKKLIDKHKKYVYHRINKMALFATIGLLGVGLVYSAKNLYTHQDNQVSIKKSFYLNKKEVRQKLIHEIDVPRILPRLKSEEEKQAESRKKYLNATITYLTEENKKAAKHTKTKKVQKTNTKRNLDKAVSKSTNAKAVKSHEVVATAYTAFCSTGCTGKTRTGYDVSNTSYYNGKRIIAVDPEVIPLYSLVQVSYEGNSFQAYAIDTGGDIKNNRIDILMDSEQEANAFGRKNVRVSW</sequence>
<evidence type="ECO:0000255" key="1"/>
<evidence type="ECO:0000256" key="2">
    <source>
        <dbReference type="SAM" id="MobiDB-lite"/>
    </source>
</evidence>
<dbReference type="EMBL" id="AL009126">
    <property type="protein sequence ID" value="CAB13925.1"/>
    <property type="molecule type" value="Genomic_DNA"/>
</dbReference>
<dbReference type="RefSeq" id="NP_389915.1">
    <property type="nucleotide sequence ID" value="NC_000964.3"/>
</dbReference>
<dbReference type="RefSeq" id="WP_010886542.1">
    <property type="nucleotide sequence ID" value="NZ_OZ025638.1"/>
</dbReference>
<dbReference type="SMR" id="O31901"/>
<dbReference type="FunCoup" id="O31901">
    <property type="interactions" value="148"/>
</dbReference>
<dbReference type="STRING" id="224308.BSU20330"/>
<dbReference type="PaxDb" id="224308-BSU20330"/>
<dbReference type="EnsemblBacteria" id="CAB13925">
    <property type="protein sequence ID" value="CAB13925"/>
    <property type="gene ID" value="BSU_20330"/>
</dbReference>
<dbReference type="GeneID" id="939539"/>
<dbReference type="KEGG" id="bsu:BSU20330"/>
<dbReference type="PATRIC" id="fig|224308.43.peg.2143"/>
<dbReference type="eggNOG" id="COG3584">
    <property type="taxonomic scope" value="Bacteria"/>
</dbReference>
<dbReference type="InParanoid" id="O31901"/>
<dbReference type="OrthoDB" id="9798935at2"/>
<dbReference type="BioCyc" id="BSUB:BSU20330-MONOMER"/>
<dbReference type="Proteomes" id="UP000001570">
    <property type="component" value="Chromosome"/>
</dbReference>
<dbReference type="GO" id="GO:0019867">
    <property type="term" value="C:outer membrane"/>
    <property type="evidence" value="ECO:0007669"/>
    <property type="project" value="InterPro"/>
</dbReference>
<dbReference type="GO" id="GO:0004553">
    <property type="term" value="F:hydrolase activity, hydrolyzing O-glycosyl compounds"/>
    <property type="evidence" value="ECO:0007669"/>
    <property type="project" value="InterPro"/>
</dbReference>
<dbReference type="GO" id="GO:0009254">
    <property type="term" value="P:peptidoglycan turnover"/>
    <property type="evidence" value="ECO:0007669"/>
    <property type="project" value="InterPro"/>
</dbReference>
<dbReference type="CDD" id="cd14667">
    <property type="entry name" value="3D_containing_proteins"/>
    <property type="match status" value="1"/>
</dbReference>
<dbReference type="Gene3D" id="2.40.40.10">
    <property type="entry name" value="RlpA-like domain"/>
    <property type="match status" value="1"/>
</dbReference>
<dbReference type="InterPro" id="IPR010611">
    <property type="entry name" value="3D_dom"/>
</dbReference>
<dbReference type="InterPro" id="IPR051933">
    <property type="entry name" value="Resuscitation_pf_RpfB"/>
</dbReference>
<dbReference type="InterPro" id="IPR036908">
    <property type="entry name" value="RlpA-like_sf"/>
</dbReference>
<dbReference type="PANTHER" id="PTHR39160">
    <property type="entry name" value="CELL WALL-BINDING PROTEIN YOCH"/>
    <property type="match status" value="1"/>
</dbReference>
<dbReference type="PANTHER" id="PTHR39160:SF6">
    <property type="entry name" value="CELL WALL-BINDING PROTEIN YOCH"/>
    <property type="match status" value="1"/>
</dbReference>
<dbReference type="Pfam" id="PF06725">
    <property type="entry name" value="3D"/>
    <property type="match status" value="1"/>
</dbReference>
<dbReference type="SUPFAM" id="SSF50685">
    <property type="entry name" value="Barwin-like endoglucanases"/>
    <property type="match status" value="1"/>
</dbReference>